<sequence>MGSTETRHPPAMFDWFFEAGCPNSLEEDPPILRQFPPDFQEQEAMQMVPRFCFPFDIEREPPSPAVQHFTFALTDLVGNRRFGFCRLRAGARSCLCILSHFPWFEVFYKILNNVGDLLAQNQVAEAEELLQNLQQHPLLGPRFSGRSEMDSSITVRSECGILPPALGNSKLLSCFVAPDAASLPSIPENRNLTELVVAVTDENIVGLFAALLAERRVLLTASKLSTLTACVHASCALLYPMRWEHVLIPTLPPHLLDYCCAPMPYLIGVHGSLAERVREKALEDVVVLNADSNTLETPFDDVQALPPDVVSLLRLRLRKVALSPGEGVSRLFLKVQALLFGGYRDALVCIPGQPVTFSEEAFLAQKPGAPLQAFHKKAVHLQLFKQFIESRLEKLNAGEGFSDQFEQEIIACRGASSGTLRSYQLWVDSLKKGSDALLHSMKTKTQPAVRNMYRSGDSLQEYCASKAKSGLKGMQNLLTIKDGDSGLQRGGSLRTPSLTSRSDRLQQRLPISQHFGQNRPLRPSRRLKTEEGPSEPLRERSPTLSPGDTQNPWAEDTLDGSFLGSGEELDLLSEILDSLNVETKSGDLQRASQSLDCCQRGAASESCSSLPDIPVGLPWQLEEDKRSQDPQPWSLPGDLSLLQDTPFSEVVSYSKNSCSQPFQQSPPSQGDPGPSLSKLDPRPSQSPCPKLLRVPTRHSPPESPQLLVSTEPNSDAVQRLQSISSPSCSHSAENPRNQPPQVLLGQACVQPLEELGAPTYVSHVSTQQRPQDKQPRVADLKKCFEN</sequence>
<proteinExistence type="evidence at protein level"/>
<organism>
    <name type="scientific">Mus musculus</name>
    <name type="common">Mouse</name>
    <dbReference type="NCBI Taxonomy" id="10090"/>
    <lineage>
        <taxon>Eukaryota</taxon>
        <taxon>Metazoa</taxon>
        <taxon>Chordata</taxon>
        <taxon>Craniata</taxon>
        <taxon>Vertebrata</taxon>
        <taxon>Euteleostomi</taxon>
        <taxon>Mammalia</taxon>
        <taxon>Eutheria</taxon>
        <taxon>Euarchontoglires</taxon>
        <taxon>Glires</taxon>
        <taxon>Rodentia</taxon>
        <taxon>Myomorpha</taxon>
        <taxon>Muroidea</taxon>
        <taxon>Muridae</taxon>
        <taxon>Murinae</taxon>
        <taxon>Mus</taxon>
        <taxon>Mus</taxon>
    </lineage>
</organism>
<keyword id="KW-0025">Alternative splicing</keyword>
<keyword id="KW-0963">Cytoplasm</keyword>
<keyword id="KW-0968">Cytoplasmic vesicle</keyword>
<keyword id="KW-0344">Guanine-nucleotide releasing factor</keyword>
<keyword id="KW-0597">Phosphoprotein</keyword>
<keyword id="KW-1185">Reference proteome</keyword>
<feature type="chain" id="PRO_0000304677" description="DENN domain-containing protein 1C">
    <location>
        <begin position="1"/>
        <end position="786"/>
    </location>
</feature>
<feature type="domain" description="uDENN" evidence="3">
    <location>
        <begin position="13"/>
        <end position="158"/>
    </location>
</feature>
<feature type="domain" description="cDENN" evidence="3">
    <location>
        <begin position="182"/>
        <end position="318"/>
    </location>
</feature>
<feature type="domain" description="dDENN" evidence="3">
    <location>
        <begin position="320"/>
        <end position="398"/>
    </location>
</feature>
<feature type="region of interest" description="Disordered" evidence="4">
    <location>
        <begin position="481"/>
        <end position="553"/>
    </location>
</feature>
<feature type="region of interest" description="Disordered" evidence="4">
    <location>
        <begin position="653"/>
        <end position="741"/>
    </location>
</feature>
<feature type="region of interest" description="Disordered" evidence="4">
    <location>
        <begin position="762"/>
        <end position="786"/>
    </location>
</feature>
<feature type="short sequence motif" description="FXDXF motif" evidence="2">
    <location>
        <begin position="401"/>
        <end position="405"/>
    </location>
</feature>
<feature type="short sequence motif" description="Clathrin box" evidence="2">
    <location>
        <begin position="570"/>
        <end position="579"/>
    </location>
</feature>
<feature type="compositionally biased region" description="Basic and acidic residues" evidence="4">
    <location>
        <begin position="527"/>
        <end position="541"/>
    </location>
</feature>
<feature type="compositionally biased region" description="Polar residues" evidence="4">
    <location>
        <begin position="542"/>
        <end position="552"/>
    </location>
</feature>
<feature type="compositionally biased region" description="Low complexity" evidence="4">
    <location>
        <begin position="657"/>
        <end position="675"/>
    </location>
</feature>
<feature type="compositionally biased region" description="Polar residues" evidence="4">
    <location>
        <begin position="706"/>
        <end position="740"/>
    </location>
</feature>
<feature type="compositionally biased region" description="Basic and acidic residues" evidence="4">
    <location>
        <begin position="770"/>
        <end position="786"/>
    </location>
</feature>
<feature type="modified residue" description="Phosphoserine" evidence="1">
    <location>
        <position position="565"/>
    </location>
</feature>
<feature type="splice variant" id="VSP_028091" description="In isoform 2." evidence="5">
    <original>LTACVHASCALLYPMRWEHVLIPTLPPHLLDYCCAPMPYLI</original>
    <variation>VRRDHFSRGRDTIKPFFCSVPPLSEQSEEVAQWLQFIGSTI</variation>
    <location>
        <begin position="227"/>
        <end position="267"/>
    </location>
</feature>
<feature type="splice variant" id="VSP_028092" description="In isoform 2." evidence="5">
    <location>
        <begin position="268"/>
        <end position="786"/>
    </location>
</feature>
<accession>Q8CFK6</accession>
<accession>Q9CXF1</accession>
<evidence type="ECO:0000250" key="1">
    <source>
        <dbReference type="UniProtKB" id="Q8IV53"/>
    </source>
</evidence>
<evidence type="ECO:0000250" key="2">
    <source>
        <dbReference type="UniProtKB" id="Q8TEH3"/>
    </source>
</evidence>
<evidence type="ECO:0000255" key="3">
    <source>
        <dbReference type="PROSITE-ProRule" id="PRU00304"/>
    </source>
</evidence>
<evidence type="ECO:0000256" key="4">
    <source>
        <dbReference type="SAM" id="MobiDB-lite"/>
    </source>
</evidence>
<evidence type="ECO:0000303" key="5">
    <source>
    </source>
</evidence>
<gene>
    <name type="primary">Dennd1c</name>
</gene>
<comment type="function">
    <text evidence="1">Guanine nucleotide exchange factor (GEF) which may activate RAB8A, RAB13 and RAB35. Promotes the exchange of GDP to GTP, converting inactive GDP-bound Rab proteins into their active GTP-bound form.</text>
</comment>
<comment type="subunit">
    <text evidence="1">Exhibits low nucleotide-independent RAB35-binding activity. Interacts with clathrin heavy chain/CLTC and with AP2A2, but not with AP2B1.</text>
</comment>
<comment type="subcellular location">
    <subcellularLocation>
        <location evidence="1">Cytoplasm</location>
        <location evidence="1">Cytosol</location>
    </subcellularLocation>
    <subcellularLocation>
        <location evidence="1">Cytoplasmic vesicle</location>
        <location evidence="1">Clathrin-coated vesicle</location>
    </subcellularLocation>
</comment>
<comment type="alternative products">
    <event type="alternative splicing"/>
    <isoform>
        <id>Q8CFK6-1</id>
        <name>1</name>
        <sequence type="displayed"/>
    </isoform>
    <isoform>
        <id>Q8CFK6-2</id>
        <name>2</name>
        <sequence type="described" ref="VSP_028091 VSP_028092"/>
    </isoform>
</comment>
<name>DEN1C_MOUSE</name>
<reference key="1">
    <citation type="journal article" date="2005" name="Science">
        <title>The transcriptional landscape of the mammalian genome.</title>
        <authorList>
            <person name="Carninci P."/>
            <person name="Kasukawa T."/>
            <person name="Katayama S."/>
            <person name="Gough J."/>
            <person name="Frith M.C."/>
            <person name="Maeda N."/>
            <person name="Oyama R."/>
            <person name="Ravasi T."/>
            <person name="Lenhard B."/>
            <person name="Wells C."/>
            <person name="Kodzius R."/>
            <person name="Shimokawa K."/>
            <person name="Bajic V.B."/>
            <person name="Brenner S.E."/>
            <person name="Batalov S."/>
            <person name="Forrest A.R."/>
            <person name="Zavolan M."/>
            <person name="Davis M.J."/>
            <person name="Wilming L.G."/>
            <person name="Aidinis V."/>
            <person name="Allen J.E."/>
            <person name="Ambesi-Impiombato A."/>
            <person name="Apweiler R."/>
            <person name="Aturaliya R.N."/>
            <person name="Bailey T.L."/>
            <person name="Bansal M."/>
            <person name="Baxter L."/>
            <person name="Beisel K.W."/>
            <person name="Bersano T."/>
            <person name="Bono H."/>
            <person name="Chalk A.M."/>
            <person name="Chiu K.P."/>
            <person name="Choudhary V."/>
            <person name="Christoffels A."/>
            <person name="Clutterbuck D.R."/>
            <person name="Crowe M.L."/>
            <person name="Dalla E."/>
            <person name="Dalrymple B.P."/>
            <person name="de Bono B."/>
            <person name="Della Gatta G."/>
            <person name="di Bernardo D."/>
            <person name="Down T."/>
            <person name="Engstrom P."/>
            <person name="Fagiolini M."/>
            <person name="Faulkner G."/>
            <person name="Fletcher C.F."/>
            <person name="Fukushima T."/>
            <person name="Furuno M."/>
            <person name="Futaki S."/>
            <person name="Gariboldi M."/>
            <person name="Georgii-Hemming P."/>
            <person name="Gingeras T.R."/>
            <person name="Gojobori T."/>
            <person name="Green R.E."/>
            <person name="Gustincich S."/>
            <person name="Harbers M."/>
            <person name="Hayashi Y."/>
            <person name="Hensch T.K."/>
            <person name="Hirokawa N."/>
            <person name="Hill D."/>
            <person name="Huminiecki L."/>
            <person name="Iacono M."/>
            <person name="Ikeo K."/>
            <person name="Iwama A."/>
            <person name="Ishikawa T."/>
            <person name="Jakt M."/>
            <person name="Kanapin A."/>
            <person name="Katoh M."/>
            <person name="Kawasawa Y."/>
            <person name="Kelso J."/>
            <person name="Kitamura H."/>
            <person name="Kitano H."/>
            <person name="Kollias G."/>
            <person name="Krishnan S.P."/>
            <person name="Kruger A."/>
            <person name="Kummerfeld S.K."/>
            <person name="Kurochkin I.V."/>
            <person name="Lareau L.F."/>
            <person name="Lazarevic D."/>
            <person name="Lipovich L."/>
            <person name="Liu J."/>
            <person name="Liuni S."/>
            <person name="McWilliam S."/>
            <person name="Madan Babu M."/>
            <person name="Madera M."/>
            <person name="Marchionni L."/>
            <person name="Matsuda H."/>
            <person name="Matsuzawa S."/>
            <person name="Miki H."/>
            <person name="Mignone F."/>
            <person name="Miyake S."/>
            <person name="Morris K."/>
            <person name="Mottagui-Tabar S."/>
            <person name="Mulder N."/>
            <person name="Nakano N."/>
            <person name="Nakauchi H."/>
            <person name="Ng P."/>
            <person name="Nilsson R."/>
            <person name="Nishiguchi S."/>
            <person name="Nishikawa S."/>
            <person name="Nori F."/>
            <person name="Ohara O."/>
            <person name="Okazaki Y."/>
            <person name="Orlando V."/>
            <person name="Pang K.C."/>
            <person name="Pavan W.J."/>
            <person name="Pavesi G."/>
            <person name="Pesole G."/>
            <person name="Petrovsky N."/>
            <person name="Piazza S."/>
            <person name="Reed J."/>
            <person name="Reid J.F."/>
            <person name="Ring B.Z."/>
            <person name="Ringwald M."/>
            <person name="Rost B."/>
            <person name="Ruan Y."/>
            <person name="Salzberg S.L."/>
            <person name="Sandelin A."/>
            <person name="Schneider C."/>
            <person name="Schoenbach C."/>
            <person name="Sekiguchi K."/>
            <person name="Semple C.A."/>
            <person name="Seno S."/>
            <person name="Sessa L."/>
            <person name="Sheng Y."/>
            <person name="Shibata Y."/>
            <person name="Shimada H."/>
            <person name="Shimada K."/>
            <person name="Silva D."/>
            <person name="Sinclair B."/>
            <person name="Sperling S."/>
            <person name="Stupka E."/>
            <person name="Sugiura K."/>
            <person name="Sultana R."/>
            <person name="Takenaka Y."/>
            <person name="Taki K."/>
            <person name="Tammoja K."/>
            <person name="Tan S.L."/>
            <person name="Tang S."/>
            <person name="Taylor M.S."/>
            <person name="Tegner J."/>
            <person name="Teichmann S.A."/>
            <person name="Ueda H.R."/>
            <person name="van Nimwegen E."/>
            <person name="Verardo R."/>
            <person name="Wei C.L."/>
            <person name="Yagi K."/>
            <person name="Yamanishi H."/>
            <person name="Zabarovsky E."/>
            <person name="Zhu S."/>
            <person name="Zimmer A."/>
            <person name="Hide W."/>
            <person name="Bult C."/>
            <person name="Grimmond S.M."/>
            <person name="Teasdale R.D."/>
            <person name="Liu E.T."/>
            <person name="Brusic V."/>
            <person name="Quackenbush J."/>
            <person name="Wahlestedt C."/>
            <person name="Mattick J.S."/>
            <person name="Hume D.A."/>
            <person name="Kai C."/>
            <person name="Sasaki D."/>
            <person name="Tomaru Y."/>
            <person name="Fukuda S."/>
            <person name="Kanamori-Katayama M."/>
            <person name="Suzuki M."/>
            <person name="Aoki J."/>
            <person name="Arakawa T."/>
            <person name="Iida J."/>
            <person name="Imamura K."/>
            <person name="Itoh M."/>
            <person name="Kato T."/>
            <person name="Kawaji H."/>
            <person name="Kawagashira N."/>
            <person name="Kawashima T."/>
            <person name="Kojima M."/>
            <person name="Kondo S."/>
            <person name="Konno H."/>
            <person name="Nakano K."/>
            <person name="Ninomiya N."/>
            <person name="Nishio T."/>
            <person name="Okada M."/>
            <person name="Plessy C."/>
            <person name="Shibata K."/>
            <person name="Shiraki T."/>
            <person name="Suzuki S."/>
            <person name="Tagami M."/>
            <person name="Waki K."/>
            <person name="Watahiki A."/>
            <person name="Okamura-Oho Y."/>
            <person name="Suzuki H."/>
            <person name="Kawai J."/>
            <person name="Hayashizaki Y."/>
        </authorList>
    </citation>
    <scope>NUCLEOTIDE SEQUENCE [LARGE SCALE MRNA] (ISOFORM 2)</scope>
    <source>
        <strain>C57BL/6J</strain>
        <tissue>Liver</tissue>
    </source>
</reference>
<reference key="2">
    <citation type="journal article" date="2004" name="Genome Res.">
        <title>The status, quality, and expansion of the NIH full-length cDNA project: the Mammalian Gene Collection (MGC).</title>
        <authorList>
            <consortium name="The MGC Project Team"/>
        </authorList>
    </citation>
    <scope>NUCLEOTIDE SEQUENCE [LARGE SCALE MRNA] (ISOFORM 1)</scope>
    <source>
        <strain>FVB/N</strain>
        <tissue>Mammary tumor</tissue>
    </source>
</reference>
<reference key="3">
    <citation type="journal article" date="2010" name="Cell">
        <title>A tissue-specific atlas of mouse protein phosphorylation and expression.</title>
        <authorList>
            <person name="Huttlin E.L."/>
            <person name="Jedrychowski M.P."/>
            <person name="Elias J.E."/>
            <person name="Goswami T."/>
            <person name="Rad R."/>
            <person name="Beausoleil S.A."/>
            <person name="Villen J."/>
            <person name="Haas W."/>
            <person name="Sowa M.E."/>
            <person name="Gygi S.P."/>
        </authorList>
    </citation>
    <scope>IDENTIFICATION BY MASS SPECTROMETRY [LARGE SCALE ANALYSIS]</scope>
    <source>
        <tissue>Brown adipose tissue</tissue>
        <tissue>Lung</tissue>
    </source>
</reference>
<protein>
    <recommendedName>
        <fullName>DENN domain-containing protein 1C</fullName>
    </recommendedName>
    <alternativeName>
        <fullName>Connecdenn 3</fullName>
    </alternativeName>
</protein>
<dbReference type="EMBL" id="AK014482">
    <property type="protein sequence ID" value="BAB29384.1"/>
    <property type="molecule type" value="mRNA"/>
</dbReference>
<dbReference type="EMBL" id="BC035208">
    <property type="protein sequence ID" value="AAH35208.1"/>
    <property type="molecule type" value="mRNA"/>
</dbReference>
<dbReference type="CCDS" id="CCDS37669.1">
    <molecule id="Q8CFK6-1"/>
</dbReference>
<dbReference type="RefSeq" id="NP_705779.1">
    <molecule id="Q8CFK6-1"/>
    <property type="nucleotide sequence ID" value="NM_153551.2"/>
</dbReference>
<dbReference type="SMR" id="Q8CFK6"/>
<dbReference type="BioGRID" id="214252">
    <property type="interactions" value="8"/>
</dbReference>
<dbReference type="FunCoup" id="Q8CFK6">
    <property type="interactions" value="478"/>
</dbReference>
<dbReference type="STRING" id="10090.ENSMUSP00000011623"/>
<dbReference type="iPTMnet" id="Q8CFK6"/>
<dbReference type="PhosphoSitePlus" id="Q8CFK6"/>
<dbReference type="jPOST" id="Q8CFK6"/>
<dbReference type="PaxDb" id="10090-ENSMUSP00000011623"/>
<dbReference type="PeptideAtlas" id="Q8CFK6"/>
<dbReference type="ProteomicsDB" id="279367">
    <molecule id="Q8CFK6-1"/>
</dbReference>
<dbReference type="ProteomicsDB" id="279368">
    <molecule id="Q8CFK6-2"/>
</dbReference>
<dbReference type="Antibodypedia" id="50064">
    <property type="antibodies" value="54 antibodies from 13 providers"/>
</dbReference>
<dbReference type="Ensembl" id="ENSMUST00000011623.9">
    <molecule id="Q8CFK6-1"/>
    <property type="protein sequence ID" value="ENSMUSP00000011623.8"/>
    <property type="gene ID" value="ENSMUSG00000002668.9"/>
</dbReference>
<dbReference type="GeneID" id="70785"/>
<dbReference type="KEGG" id="mmu:70785"/>
<dbReference type="UCSC" id="uc008ddy.1">
    <molecule id="Q8CFK6-1"/>
    <property type="organism name" value="mouse"/>
</dbReference>
<dbReference type="UCSC" id="uc008ddz.1">
    <molecule id="Q8CFK6-2"/>
    <property type="organism name" value="mouse"/>
</dbReference>
<dbReference type="AGR" id="MGI:1918035"/>
<dbReference type="CTD" id="79958"/>
<dbReference type="MGI" id="MGI:1918035">
    <property type="gene designation" value="Dennd1c"/>
</dbReference>
<dbReference type="VEuPathDB" id="HostDB:ENSMUSG00000002668"/>
<dbReference type="eggNOG" id="KOG3569">
    <property type="taxonomic scope" value="Eukaryota"/>
</dbReference>
<dbReference type="GeneTree" id="ENSGT00940000161573"/>
<dbReference type="HOGENOM" id="CLU_008196_4_2_1"/>
<dbReference type="InParanoid" id="Q8CFK6"/>
<dbReference type="OMA" id="QQECRTD"/>
<dbReference type="OrthoDB" id="206724at2759"/>
<dbReference type="PhylomeDB" id="Q8CFK6"/>
<dbReference type="TreeFam" id="TF320336"/>
<dbReference type="Reactome" id="R-MMU-8876198">
    <property type="pathway name" value="RAB GEFs exchange GTP for GDP on RABs"/>
</dbReference>
<dbReference type="BioGRID-ORCS" id="70785">
    <property type="hits" value="2 hits in 75 CRISPR screens"/>
</dbReference>
<dbReference type="PRO" id="PR:Q8CFK6"/>
<dbReference type="Proteomes" id="UP000000589">
    <property type="component" value="Chromosome 17"/>
</dbReference>
<dbReference type="RNAct" id="Q8CFK6">
    <property type="molecule type" value="protein"/>
</dbReference>
<dbReference type="Bgee" id="ENSMUSG00000002668">
    <property type="expression patterns" value="Expressed in granulocyte and 86 other cell types or tissues"/>
</dbReference>
<dbReference type="ExpressionAtlas" id="Q8CFK6">
    <property type="expression patterns" value="baseline and differential"/>
</dbReference>
<dbReference type="GO" id="GO:0005813">
    <property type="term" value="C:centrosome"/>
    <property type="evidence" value="ECO:0007669"/>
    <property type="project" value="Ensembl"/>
</dbReference>
<dbReference type="GO" id="GO:0030136">
    <property type="term" value="C:clathrin-coated vesicle"/>
    <property type="evidence" value="ECO:0007669"/>
    <property type="project" value="UniProtKB-SubCell"/>
</dbReference>
<dbReference type="GO" id="GO:0005829">
    <property type="term" value="C:cytosol"/>
    <property type="evidence" value="ECO:0007669"/>
    <property type="project" value="UniProtKB-SubCell"/>
</dbReference>
<dbReference type="GO" id="GO:0005654">
    <property type="term" value="C:nucleoplasm"/>
    <property type="evidence" value="ECO:0007669"/>
    <property type="project" value="Ensembl"/>
</dbReference>
<dbReference type="GO" id="GO:0005085">
    <property type="term" value="F:guanyl-nucleotide exchange factor activity"/>
    <property type="evidence" value="ECO:0000250"/>
    <property type="project" value="UniProtKB"/>
</dbReference>
<dbReference type="FunFam" id="3.30.450.200:FF:000003">
    <property type="entry name" value="DENN domain containing 1A"/>
    <property type="match status" value="1"/>
</dbReference>
<dbReference type="FunFam" id="3.40.50.11500:FF:000001">
    <property type="entry name" value="Putative DENN domain-containing protein 1A"/>
    <property type="match status" value="1"/>
</dbReference>
<dbReference type="Gene3D" id="3.30.450.200">
    <property type="match status" value="1"/>
</dbReference>
<dbReference type="Gene3D" id="3.40.50.11500">
    <property type="match status" value="1"/>
</dbReference>
<dbReference type="Gene3D" id="6.10.140.1000">
    <property type="match status" value="1"/>
</dbReference>
<dbReference type="InterPro" id="IPR001194">
    <property type="entry name" value="cDENN_dom"/>
</dbReference>
<dbReference type="InterPro" id="IPR005112">
    <property type="entry name" value="dDENN_dom"/>
</dbReference>
<dbReference type="InterPro" id="IPR043153">
    <property type="entry name" value="DENN_C"/>
</dbReference>
<dbReference type="InterPro" id="IPR040032">
    <property type="entry name" value="DENND1A/B/C"/>
</dbReference>
<dbReference type="InterPro" id="IPR037516">
    <property type="entry name" value="Tripartite_DENN"/>
</dbReference>
<dbReference type="InterPro" id="IPR005113">
    <property type="entry name" value="uDENN_dom"/>
</dbReference>
<dbReference type="PANTHER" id="PTHR13196">
    <property type="entry name" value="DENN DOMAIN-CONTAINING"/>
    <property type="match status" value="1"/>
</dbReference>
<dbReference type="PANTHER" id="PTHR13196:SF25">
    <property type="entry name" value="DENN DOMAIN-CONTAINING PROTEIN 1C"/>
    <property type="match status" value="1"/>
</dbReference>
<dbReference type="Pfam" id="PF03455">
    <property type="entry name" value="dDENN"/>
    <property type="match status" value="1"/>
</dbReference>
<dbReference type="Pfam" id="PF02141">
    <property type="entry name" value="DENN"/>
    <property type="match status" value="1"/>
</dbReference>
<dbReference type="Pfam" id="PF03456">
    <property type="entry name" value="uDENN"/>
    <property type="match status" value="1"/>
</dbReference>
<dbReference type="SMART" id="SM00801">
    <property type="entry name" value="dDENN"/>
    <property type="match status" value="1"/>
</dbReference>
<dbReference type="SMART" id="SM00799">
    <property type="entry name" value="DENN"/>
    <property type="match status" value="1"/>
</dbReference>
<dbReference type="SMART" id="SM00800">
    <property type="entry name" value="uDENN"/>
    <property type="match status" value="1"/>
</dbReference>
<dbReference type="PROSITE" id="PS50211">
    <property type="entry name" value="DENN"/>
    <property type="match status" value="1"/>
</dbReference>